<evidence type="ECO:0000255" key="1">
    <source>
        <dbReference type="HAMAP-Rule" id="MF_01202"/>
    </source>
</evidence>
<dbReference type="EC" id="1.4.99.-" evidence="1"/>
<dbReference type="EMBL" id="CP000720">
    <property type="protein sequence ID" value="ABS48583.1"/>
    <property type="molecule type" value="Genomic_DNA"/>
</dbReference>
<dbReference type="RefSeq" id="WP_002211686.1">
    <property type="nucleotide sequence ID" value="NC_009708.1"/>
</dbReference>
<dbReference type="SMR" id="A7FI92"/>
<dbReference type="KEGG" id="ypi:YpsIP31758_1997"/>
<dbReference type="HOGENOM" id="CLU_007884_9_2_6"/>
<dbReference type="UniPathway" id="UPA00043">
    <property type="reaction ID" value="UER00498"/>
</dbReference>
<dbReference type="Proteomes" id="UP000002412">
    <property type="component" value="Chromosome"/>
</dbReference>
<dbReference type="GO" id="GO:0005737">
    <property type="term" value="C:cytoplasm"/>
    <property type="evidence" value="ECO:0007669"/>
    <property type="project" value="TreeGrafter"/>
</dbReference>
<dbReference type="GO" id="GO:0005886">
    <property type="term" value="C:plasma membrane"/>
    <property type="evidence" value="ECO:0007669"/>
    <property type="project" value="TreeGrafter"/>
</dbReference>
<dbReference type="GO" id="GO:0008718">
    <property type="term" value="F:D-amino-acid dehydrogenase activity"/>
    <property type="evidence" value="ECO:0007669"/>
    <property type="project" value="UniProtKB-UniRule"/>
</dbReference>
<dbReference type="GO" id="GO:0055130">
    <property type="term" value="P:D-alanine catabolic process"/>
    <property type="evidence" value="ECO:0007669"/>
    <property type="project" value="UniProtKB-UniPathway"/>
</dbReference>
<dbReference type="FunFam" id="3.50.50.60:FF:000020">
    <property type="entry name" value="D-amino acid dehydrogenase"/>
    <property type="match status" value="1"/>
</dbReference>
<dbReference type="Gene3D" id="3.30.9.10">
    <property type="entry name" value="D-Amino Acid Oxidase, subunit A, domain 2"/>
    <property type="match status" value="1"/>
</dbReference>
<dbReference type="Gene3D" id="3.50.50.60">
    <property type="entry name" value="FAD/NAD(P)-binding domain"/>
    <property type="match status" value="2"/>
</dbReference>
<dbReference type="HAMAP" id="MF_01202">
    <property type="entry name" value="DadA"/>
    <property type="match status" value="1"/>
</dbReference>
<dbReference type="InterPro" id="IPR023080">
    <property type="entry name" value="DadA"/>
</dbReference>
<dbReference type="InterPro" id="IPR006076">
    <property type="entry name" value="FAD-dep_OxRdtase"/>
</dbReference>
<dbReference type="InterPro" id="IPR036188">
    <property type="entry name" value="FAD/NAD-bd_sf"/>
</dbReference>
<dbReference type="NCBIfam" id="NF001933">
    <property type="entry name" value="PRK00711.1"/>
    <property type="match status" value="1"/>
</dbReference>
<dbReference type="PANTHER" id="PTHR13847:SF280">
    <property type="entry name" value="D-AMINO ACID DEHYDROGENASE"/>
    <property type="match status" value="1"/>
</dbReference>
<dbReference type="PANTHER" id="PTHR13847">
    <property type="entry name" value="SARCOSINE DEHYDROGENASE-RELATED"/>
    <property type="match status" value="1"/>
</dbReference>
<dbReference type="Pfam" id="PF01266">
    <property type="entry name" value="DAO"/>
    <property type="match status" value="1"/>
</dbReference>
<dbReference type="SUPFAM" id="SSF54373">
    <property type="entry name" value="FAD-linked reductases, C-terminal domain"/>
    <property type="match status" value="1"/>
</dbReference>
<dbReference type="SUPFAM" id="SSF51905">
    <property type="entry name" value="FAD/NAD(P)-binding domain"/>
    <property type="match status" value="1"/>
</dbReference>
<accession>A7FI92</accession>
<organism>
    <name type="scientific">Yersinia pseudotuberculosis serotype O:1b (strain IP 31758)</name>
    <dbReference type="NCBI Taxonomy" id="349747"/>
    <lineage>
        <taxon>Bacteria</taxon>
        <taxon>Pseudomonadati</taxon>
        <taxon>Pseudomonadota</taxon>
        <taxon>Gammaproteobacteria</taxon>
        <taxon>Enterobacterales</taxon>
        <taxon>Yersiniaceae</taxon>
        <taxon>Yersinia</taxon>
    </lineage>
</organism>
<comment type="function">
    <text evidence="1">Oxidative deamination of D-amino acids.</text>
</comment>
<comment type="catalytic activity">
    <reaction evidence="1">
        <text>a D-alpha-amino acid + A + H2O = a 2-oxocarboxylate + AH2 + NH4(+)</text>
        <dbReference type="Rhea" id="RHEA:18125"/>
        <dbReference type="ChEBI" id="CHEBI:13193"/>
        <dbReference type="ChEBI" id="CHEBI:15377"/>
        <dbReference type="ChEBI" id="CHEBI:17499"/>
        <dbReference type="ChEBI" id="CHEBI:28938"/>
        <dbReference type="ChEBI" id="CHEBI:35179"/>
        <dbReference type="ChEBI" id="CHEBI:59871"/>
    </reaction>
</comment>
<comment type="cofactor">
    <cofactor evidence="1">
        <name>FAD</name>
        <dbReference type="ChEBI" id="CHEBI:57692"/>
    </cofactor>
</comment>
<comment type="pathway">
    <text>Amino-acid degradation; D-alanine degradation; NH(3) and pyruvate from D-alanine: step 1/1.</text>
</comment>
<comment type="similarity">
    <text evidence="1">Belongs to the DadA oxidoreductase family.</text>
</comment>
<keyword id="KW-0274">FAD</keyword>
<keyword id="KW-0285">Flavoprotein</keyword>
<keyword id="KW-0560">Oxidoreductase</keyword>
<proteinExistence type="inferred from homology"/>
<protein>
    <recommendedName>
        <fullName evidence="1">D-amino acid dehydrogenase</fullName>
        <ecNumber evidence="1">1.4.99.-</ecNumber>
    </recommendedName>
</protein>
<reference key="1">
    <citation type="journal article" date="2007" name="PLoS Genet.">
        <title>The complete genome sequence of Yersinia pseudotuberculosis IP31758, the causative agent of Far East scarlet-like fever.</title>
        <authorList>
            <person name="Eppinger M."/>
            <person name="Rosovitz M.J."/>
            <person name="Fricke W.F."/>
            <person name="Rasko D.A."/>
            <person name="Kokorina G."/>
            <person name="Fayolle C."/>
            <person name="Lindler L.E."/>
            <person name="Carniel E."/>
            <person name="Ravel J."/>
        </authorList>
    </citation>
    <scope>NUCLEOTIDE SEQUENCE [LARGE SCALE GENOMIC DNA]</scope>
    <source>
        <strain>IP 31758</strain>
    </source>
</reference>
<name>DADA_YERP3</name>
<feature type="chain" id="PRO_1000066125" description="D-amino acid dehydrogenase">
    <location>
        <begin position="1"/>
        <end position="434"/>
    </location>
</feature>
<feature type="binding site" evidence="1">
    <location>
        <begin position="3"/>
        <end position="17"/>
    </location>
    <ligand>
        <name>FAD</name>
        <dbReference type="ChEBI" id="CHEBI:57692"/>
    </ligand>
</feature>
<sequence length="434" mass="47204">MRVVILGSGVVGVTSAWYLAKEGHDVTVIDRQDGPAQETSAGNAGQISPGYAAPWAAPGVPLKAIKWMFQRHAPLAIRLDGSSLQLRWMWQMLRNCDTSHYMVNKSRMVRLAEYSRDCLKDLRAATGIQYEGRQGGTLQLFRTEQQFDNAAKDIAVLDDAGVPYSLLTAEQLATVEPALAKVAHKLTGGLRLPNDETGDCKLFTERLAKMAEQAGVKFIFNRSVDKLLVEGDQIAGVLCGDDIIKADAYVVAFGAYSTALLAGLVSIPVYPLKGYSLTIPITDPASAPFSTVLDETYKIAITRFDDRIRVGGMAEIVGFNTQLAPARRETLEMVVRDLYPHGGDISQAVFWSGLRPMTPDGTPIVGRTPLKNLYLNTGHGTLGWTMACGSGQLLADIIQGRRPAIVADDLSVARYRAGFQPLNIAPLHDIHPIR</sequence>
<gene>
    <name evidence="1" type="primary">dadA</name>
    <name type="ordered locus">YpsIP31758_1997</name>
</gene>